<sequence length="181" mass="20997">MENRNRNSRPIKNQDPVNEFIRAHQVLVIDEDKQNLGVMSKRQALEIAKSKNLDLYQVGVQPDGTVITRIVNFGKLKYEQQKKSKEAKKHQTKIENKEIRITVNIGKHDLETKARKAKEFLEEGSRVKVSLKFRGREVVYLDLGQQTLNNFFELVSDVGKMEKEAKLNGKFLDMYIVPKKN</sequence>
<evidence type="ECO:0000255" key="1">
    <source>
        <dbReference type="HAMAP-Rule" id="MF_00080"/>
    </source>
</evidence>
<protein>
    <recommendedName>
        <fullName evidence="1">Translation initiation factor IF-3</fullName>
    </recommendedName>
</protein>
<accession>Q2SSS1</accession>
<keyword id="KW-0963">Cytoplasm</keyword>
<keyword id="KW-0396">Initiation factor</keyword>
<keyword id="KW-0648">Protein biosynthesis</keyword>
<feature type="chain" id="PRO_1000004544" description="Translation initiation factor IF-3">
    <location>
        <begin position="1"/>
        <end position="181"/>
    </location>
</feature>
<gene>
    <name evidence="1" type="primary">infC</name>
    <name type="ordered locus">MCAP_0205</name>
</gene>
<reference key="1">
    <citation type="submission" date="2005-09" db="EMBL/GenBank/DDBJ databases">
        <authorList>
            <person name="Glass J.I."/>
            <person name="Lartigue C."/>
            <person name="Pfannkoch C."/>
            <person name="Baden-Tillson H."/>
            <person name="Smith H.O."/>
            <person name="Venter J.C."/>
            <person name="Roske K."/>
            <person name="Wise K.S."/>
            <person name="Calcutt M.J."/>
            <person name="Nelson W.C."/>
            <person name="Nierman W.C."/>
        </authorList>
    </citation>
    <scope>NUCLEOTIDE SEQUENCE [LARGE SCALE GENOMIC DNA]</scope>
    <source>
        <strain>California kid / ATCC 27343 / NCTC 10154</strain>
    </source>
</reference>
<comment type="function">
    <text evidence="1">IF-3 binds to the 30S ribosomal subunit and shifts the equilibrium between 70S ribosomes and their 50S and 30S subunits in favor of the free subunits, thus enhancing the availability of 30S subunits on which protein synthesis initiation begins.</text>
</comment>
<comment type="subunit">
    <text evidence="1">Monomer.</text>
</comment>
<comment type="subcellular location">
    <subcellularLocation>
        <location evidence="1">Cytoplasm</location>
    </subcellularLocation>
</comment>
<comment type="similarity">
    <text evidence="1">Belongs to the IF-3 family.</text>
</comment>
<name>IF3_MYCCT</name>
<dbReference type="EMBL" id="CP000123">
    <property type="protein sequence ID" value="ABC01134.1"/>
    <property type="molecule type" value="Genomic_DNA"/>
</dbReference>
<dbReference type="RefSeq" id="WP_011387093.1">
    <property type="nucleotide sequence ID" value="NC_007633.1"/>
</dbReference>
<dbReference type="SMR" id="Q2SSS1"/>
<dbReference type="GeneID" id="23778842"/>
<dbReference type="KEGG" id="mcp:MCAP_0205"/>
<dbReference type="HOGENOM" id="CLU_054919_3_2_14"/>
<dbReference type="PhylomeDB" id="Q2SSS1"/>
<dbReference type="Proteomes" id="UP000001928">
    <property type="component" value="Chromosome"/>
</dbReference>
<dbReference type="GO" id="GO:0005829">
    <property type="term" value="C:cytosol"/>
    <property type="evidence" value="ECO:0007669"/>
    <property type="project" value="TreeGrafter"/>
</dbReference>
<dbReference type="GO" id="GO:0016020">
    <property type="term" value="C:membrane"/>
    <property type="evidence" value="ECO:0007669"/>
    <property type="project" value="TreeGrafter"/>
</dbReference>
<dbReference type="GO" id="GO:0043022">
    <property type="term" value="F:ribosome binding"/>
    <property type="evidence" value="ECO:0007669"/>
    <property type="project" value="TreeGrafter"/>
</dbReference>
<dbReference type="GO" id="GO:0003743">
    <property type="term" value="F:translation initiation factor activity"/>
    <property type="evidence" value="ECO:0007669"/>
    <property type="project" value="UniProtKB-UniRule"/>
</dbReference>
<dbReference type="GO" id="GO:0032790">
    <property type="term" value="P:ribosome disassembly"/>
    <property type="evidence" value="ECO:0007669"/>
    <property type="project" value="TreeGrafter"/>
</dbReference>
<dbReference type="Gene3D" id="3.30.110.10">
    <property type="entry name" value="Translation initiation factor 3 (IF-3), C-terminal domain"/>
    <property type="match status" value="1"/>
</dbReference>
<dbReference type="Gene3D" id="3.10.20.80">
    <property type="entry name" value="Translation initiation factor 3 (IF-3), N-terminal domain"/>
    <property type="match status" value="1"/>
</dbReference>
<dbReference type="HAMAP" id="MF_00080">
    <property type="entry name" value="IF_3"/>
    <property type="match status" value="1"/>
</dbReference>
<dbReference type="InterPro" id="IPR036788">
    <property type="entry name" value="T_IF-3_C_sf"/>
</dbReference>
<dbReference type="InterPro" id="IPR036787">
    <property type="entry name" value="T_IF-3_N_sf"/>
</dbReference>
<dbReference type="InterPro" id="IPR019813">
    <property type="entry name" value="Translation_initiation_fac3_CS"/>
</dbReference>
<dbReference type="InterPro" id="IPR001288">
    <property type="entry name" value="Translation_initiation_fac_3"/>
</dbReference>
<dbReference type="InterPro" id="IPR019815">
    <property type="entry name" value="Translation_initiation_fac_3_C"/>
</dbReference>
<dbReference type="InterPro" id="IPR019814">
    <property type="entry name" value="Translation_initiation_fac_3_N"/>
</dbReference>
<dbReference type="NCBIfam" id="TIGR00168">
    <property type="entry name" value="infC"/>
    <property type="match status" value="1"/>
</dbReference>
<dbReference type="PANTHER" id="PTHR10938">
    <property type="entry name" value="TRANSLATION INITIATION FACTOR IF-3"/>
    <property type="match status" value="1"/>
</dbReference>
<dbReference type="PANTHER" id="PTHR10938:SF0">
    <property type="entry name" value="TRANSLATION INITIATION FACTOR IF-3, MITOCHONDRIAL"/>
    <property type="match status" value="1"/>
</dbReference>
<dbReference type="Pfam" id="PF00707">
    <property type="entry name" value="IF3_C"/>
    <property type="match status" value="1"/>
</dbReference>
<dbReference type="Pfam" id="PF05198">
    <property type="entry name" value="IF3_N"/>
    <property type="match status" value="1"/>
</dbReference>
<dbReference type="SUPFAM" id="SSF55200">
    <property type="entry name" value="Translation initiation factor IF3, C-terminal domain"/>
    <property type="match status" value="1"/>
</dbReference>
<dbReference type="SUPFAM" id="SSF54364">
    <property type="entry name" value="Translation initiation factor IF3, N-terminal domain"/>
    <property type="match status" value="1"/>
</dbReference>
<dbReference type="PROSITE" id="PS00938">
    <property type="entry name" value="IF3"/>
    <property type="match status" value="1"/>
</dbReference>
<proteinExistence type="inferred from homology"/>
<organism>
    <name type="scientific">Mycoplasma capricolum subsp. capricolum (strain California kid / ATCC 27343 / NCTC 10154)</name>
    <dbReference type="NCBI Taxonomy" id="340047"/>
    <lineage>
        <taxon>Bacteria</taxon>
        <taxon>Bacillati</taxon>
        <taxon>Mycoplasmatota</taxon>
        <taxon>Mollicutes</taxon>
        <taxon>Mycoplasmataceae</taxon>
        <taxon>Mycoplasma</taxon>
    </lineage>
</organism>